<protein>
    <recommendedName>
        <fullName evidence="1">Non-structural protein 1</fullName>
        <shortName evidence="1">NS1</shortName>
    </recommendedName>
    <alternativeName>
        <fullName evidence="1">NS1A</fullName>
    </alternativeName>
</protein>
<feature type="chain" id="PRO_0000078956" description="Non-structural protein 1">
    <location>
        <begin position="1"/>
        <end position="230"/>
    </location>
</feature>
<feature type="region of interest" description="RNA-binding and homodimerization" evidence="1">
    <location>
        <begin position="1"/>
        <end position="73"/>
    </location>
</feature>
<feature type="region of interest" description="CPSF4-binding" evidence="1">
    <location>
        <begin position="180"/>
        <end position="215"/>
    </location>
</feature>
<feature type="region of interest" description="Disordered" evidence="2">
    <location>
        <begin position="206"/>
        <end position="230"/>
    </location>
</feature>
<feature type="region of interest" description="PABPN1-binding" evidence="1">
    <location>
        <begin position="223"/>
        <end position="230"/>
    </location>
</feature>
<feature type="short sequence motif" description="Nuclear localization signal" evidence="1">
    <location>
        <begin position="34"/>
        <end position="38"/>
    </location>
</feature>
<feature type="short sequence motif" description="Nuclear export signal" evidence="1">
    <location>
        <begin position="137"/>
        <end position="146"/>
    </location>
</feature>
<feature type="compositionally biased region" description="Basic and acidic residues" evidence="2">
    <location>
        <begin position="218"/>
        <end position="230"/>
    </location>
</feature>
<gene>
    <name evidence="1" type="primary">NS</name>
</gene>
<organismHost>
    <name type="scientific">Aves</name>
    <dbReference type="NCBI Taxonomy" id="8782"/>
</organismHost>
<organismHost>
    <name type="scientific">Homo sapiens</name>
    <name type="common">Human</name>
    <dbReference type="NCBI Taxonomy" id="9606"/>
</organismHost>
<organismHost>
    <name type="scientific">Sus scrofa</name>
    <name type="common">Pig</name>
    <dbReference type="NCBI Taxonomy" id="9823"/>
</organismHost>
<accession>P18295</accession>
<keyword id="KW-0025">Alternative splicing</keyword>
<keyword id="KW-1262">Eukaryotic host gene expression shutoff by virus</keyword>
<keyword id="KW-1035">Host cytoplasm</keyword>
<keyword id="KW-1190">Host gene expression shutoff by virus</keyword>
<keyword id="KW-1192">Host mRNA suppression by virus</keyword>
<keyword id="KW-1048">Host nucleus</keyword>
<keyword id="KW-0945">Host-virus interaction</keyword>
<keyword id="KW-1090">Inhibition of host innate immune response by virus</keyword>
<keyword id="KW-1114">Inhibition of host interferon signaling pathway by virus</keyword>
<keyword id="KW-1102">Inhibition of host PKR by virus</keyword>
<keyword id="KW-1103">Inhibition of host pre-mRNA processing by virus</keyword>
<keyword id="KW-1088">Inhibition of host RIG-I by virus</keyword>
<keyword id="KW-1113">Inhibition of host RLR pathway by virus</keyword>
<keyword id="KW-0922">Interferon antiviral system evasion</keyword>
<keyword id="KW-0694">RNA-binding</keyword>
<keyword id="KW-0832">Ubl conjugation</keyword>
<keyword id="KW-0899">Viral immunoevasion</keyword>
<comment type="function">
    <text evidence="1">Inhibits post-transcriptional processing of cellular pre-mRNA, by binding and inhibiting two cellular proteins that are required for the 3'-end processing of cellular pre-mRNAs: the 30 kDa cleavage and polyadenylation specificity factor/CPSF4 and the poly(A)-binding protein 2/PABPN1. In turn, unprocessed 3' end pre-mRNAs accumulate in the host nucleus and are no longer exported to the cytoplasm. Cellular protein synthesis is thereby shut off very early after virus infection. Viral protein synthesis is not affected by the inhibition of the cellular 3' end processing machinery because the poly(A) tails of viral mRNAs are produced by the viral polymerase through a stuttering mechanism. Prevents the establishment of the cellular antiviral state by inhibiting TRIM25-mediated RIGI ubiquitination, which normally triggers the antiviral transduction signal that leads to the activation of type I IFN genes by transcription factors IRF3 and IRF7. Also binds poly(A) and U6 snRNA. Inhibits the integrated stress response (ISR) in the infected cell by blocking dsRNA binding by EIF2AK2/PKR and further phosphorylation of EIF2S1/EIF-2ALPHA. Stress granule formation is thus inhibited, which allows protein synthesis and viral replication.</text>
</comment>
<comment type="subunit">
    <text evidence="1">Homodimer. Interacts with host TRIM25 (via coiled coil); this interaction specifically inhibits TRIM25 multimerization and TRIM25-mediated RIGI CARD ubiquitination. Interacts with human EIF2AK2/PKR, CPSF4, IVNS1ABP and PABPN1.</text>
</comment>
<comment type="subcellular location">
    <subcellularLocation>
        <location evidence="1">Host nucleus</location>
    </subcellularLocation>
    <subcellularLocation>
        <location evidence="1">Host cytoplasm</location>
    </subcellularLocation>
    <text evidence="1">In uninfected, transfected cells, NS1 is localized in the nucleus. Only in virus infected cells, the nuclear export signal is unveiled, presumably by a viral protein, and a fraction of NS1 is exported in the cytoplasm.</text>
</comment>
<comment type="alternative products">
    <event type="alternative splicing"/>
    <isoform>
        <id>P18295-1</id>
        <name>NS1</name>
        <sequence type="displayed"/>
    </isoform>
    <isoform>
        <id>P18295-2</id>
        <name>NEP</name>
        <name>NS2</name>
        <sequence type="not described"/>
    </isoform>
</comment>
<comment type="domain">
    <text evidence="1">The dsRNA-binding region is required for suppression of RNA silencing.</text>
</comment>
<comment type="PTM">
    <text evidence="1">Upon interferon induction, ISGylated via host HERC5; this results in the impairment of NS1 interaction with RNA targets due to its inability to form homodimers and to interact with host EIF2AK2/PKR.</text>
</comment>
<comment type="similarity">
    <text evidence="1">Belongs to the influenza A viruses NS1 family.</text>
</comment>
<organism>
    <name type="scientific">Influenza A virus (strain A/Swine/Iowa/15/1930 H1N1)</name>
    <dbReference type="NCBI Taxonomy" id="380342"/>
    <lineage>
        <taxon>Viruses</taxon>
        <taxon>Riboviria</taxon>
        <taxon>Orthornavirae</taxon>
        <taxon>Negarnaviricota</taxon>
        <taxon>Polyploviricotina</taxon>
        <taxon>Insthoviricetes</taxon>
        <taxon>Articulavirales</taxon>
        <taxon>Orthomyxoviridae</taxon>
        <taxon>Alphainfluenzavirus</taxon>
        <taxon>Alphainfluenzavirus influenzae</taxon>
        <taxon>Influenza A virus</taxon>
    </lineage>
</organism>
<name>NS1_I30A0</name>
<reference key="1">
    <citation type="journal article" date="1984" name="Virology">
        <title>Genetic relatedness between A/Swine/Iowa/15/30(H1N1) and human influenza viruses.</title>
        <authorList>
            <person name="Nakajima K."/>
            <person name="Nobusawa E."/>
            <person name="Nakajima S."/>
        </authorList>
    </citation>
    <scope>NUCLEOTIDE SEQUENCE [GENOMIC RNA]</scope>
</reference>
<reference key="2">
    <citation type="journal article" date="2003" name="Virology">
        <title>Intracellular warfare between human influenza viruses and human cells: the roles of the viral NS1 protein.</title>
        <authorList>
            <person name="Krug R.M."/>
            <person name="Yuan W."/>
            <person name="Noah D.L."/>
            <person name="Latham A.G."/>
        </authorList>
    </citation>
    <scope>REVIEW</scope>
</reference>
<dbReference type="EMBL" id="M33046">
    <property type="protein sequence ID" value="AAA43684.1"/>
    <property type="molecule type" value="Genomic_RNA"/>
</dbReference>
<dbReference type="SMR" id="P18295"/>
<dbReference type="GO" id="GO:0030430">
    <property type="term" value="C:host cell cytoplasm"/>
    <property type="evidence" value="ECO:0007669"/>
    <property type="project" value="UniProtKB-SubCell"/>
</dbReference>
<dbReference type="GO" id="GO:0042025">
    <property type="term" value="C:host cell nucleus"/>
    <property type="evidence" value="ECO:0007669"/>
    <property type="project" value="UniProtKB-SubCell"/>
</dbReference>
<dbReference type="GO" id="GO:0030291">
    <property type="term" value="F:protein serine/threonine kinase inhibitor activity"/>
    <property type="evidence" value="ECO:0007669"/>
    <property type="project" value="UniProtKB-KW"/>
</dbReference>
<dbReference type="GO" id="GO:0003723">
    <property type="term" value="F:RNA binding"/>
    <property type="evidence" value="ECO:0007669"/>
    <property type="project" value="UniProtKB-KW"/>
</dbReference>
<dbReference type="GO" id="GO:0039540">
    <property type="term" value="P:symbiont-mediated suppression of host cytoplasmic pattern recognition receptor signaling pathway via inhibition of RIG-I activity"/>
    <property type="evidence" value="ECO:0007669"/>
    <property type="project" value="UniProtKB-KW"/>
</dbReference>
<dbReference type="GO" id="GO:0039657">
    <property type="term" value="P:symbiont-mediated suppression of host gene expression"/>
    <property type="evidence" value="ECO:0007669"/>
    <property type="project" value="UniProtKB-KW"/>
</dbReference>
<dbReference type="GO" id="GO:0039524">
    <property type="term" value="P:symbiont-mediated suppression of host mRNA processing"/>
    <property type="evidence" value="ECO:0007669"/>
    <property type="project" value="UniProtKB-KW"/>
</dbReference>
<dbReference type="GO" id="GO:0039580">
    <property type="term" value="P:symbiont-mediated suppression of host PKR/eIFalpha signaling"/>
    <property type="evidence" value="ECO:0007669"/>
    <property type="project" value="UniProtKB-KW"/>
</dbReference>
<dbReference type="GO" id="GO:0039502">
    <property type="term" value="P:symbiont-mediated suppression of host type I interferon-mediated signaling pathway"/>
    <property type="evidence" value="ECO:0007669"/>
    <property type="project" value="UniProtKB-KW"/>
</dbReference>
<dbReference type="FunFam" id="1.10.287.10:FF:000001">
    <property type="entry name" value="Non-structural protein 1"/>
    <property type="match status" value="1"/>
</dbReference>
<dbReference type="FunFam" id="3.30.420.330:FF:000001">
    <property type="entry name" value="Non-structural protein 1"/>
    <property type="match status" value="1"/>
</dbReference>
<dbReference type="Gene3D" id="3.30.420.330">
    <property type="entry name" value="Influenza virus non-structural protein, effector domain"/>
    <property type="match status" value="1"/>
</dbReference>
<dbReference type="Gene3D" id="1.10.287.10">
    <property type="entry name" value="S15/NS1, RNA-binding"/>
    <property type="match status" value="1"/>
</dbReference>
<dbReference type="HAMAP" id="MF_04066">
    <property type="entry name" value="INFV_NS1"/>
    <property type="match status" value="1"/>
</dbReference>
<dbReference type="InterPro" id="IPR004208">
    <property type="entry name" value="NS1"/>
</dbReference>
<dbReference type="InterPro" id="IPR000256">
    <property type="entry name" value="NS1A"/>
</dbReference>
<dbReference type="InterPro" id="IPR038064">
    <property type="entry name" value="NS1A_effect_dom-like_sf"/>
</dbReference>
<dbReference type="InterPro" id="IPR009068">
    <property type="entry name" value="uS15_NS1_RNA-bd_sf"/>
</dbReference>
<dbReference type="Pfam" id="PF00600">
    <property type="entry name" value="Flu_NS1"/>
    <property type="match status" value="1"/>
</dbReference>
<dbReference type="SUPFAM" id="SSF143021">
    <property type="entry name" value="Ns1 effector domain-like"/>
    <property type="match status" value="1"/>
</dbReference>
<dbReference type="SUPFAM" id="SSF47060">
    <property type="entry name" value="S15/NS1 RNA-binding domain"/>
    <property type="match status" value="1"/>
</dbReference>
<evidence type="ECO:0000255" key="1">
    <source>
        <dbReference type="HAMAP-Rule" id="MF_04066"/>
    </source>
</evidence>
<evidence type="ECO:0000256" key="2">
    <source>
        <dbReference type="SAM" id="MobiDB-lite"/>
    </source>
</evidence>
<sequence>MDSNTVSSFQVDCFLWHVRKRFADQKLGDAPFLDRLRRDQKSLRGRASTLGLDIETATRAGKQIVERILEEESNEALKMTIASVPASRYLTDMTLEEMSRDWFMLMPKQKVAGSLCIRMDQAIMEKSIILKANFSVIFDRLETLILLRAFTEEGAIVGEISPLHSLPGHTDEDVKNAVGVLIGGLEWNGNTVRVSENLQRFAWRSRNENERPSLPPKQKREVAGTIRSEV</sequence>
<proteinExistence type="inferred from homology"/>